<proteinExistence type="evidence at transcript level"/>
<reference key="1">
    <citation type="journal article" date="2003" name="Endocrinology">
        <title>The mouse prolactin gene family locus.</title>
        <authorList>
            <person name="Wiemers D.O."/>
            <person name="Shao L.-J."/>
            <person name="Ain R."/>
            <person name="Dai G."/>
            <person name="Soares M.J."/>
        </authorList>
    </citation>
    <scope>NUCLEOTIDE SEQUENCE [MRNA]</scope>
    <scope>DEVELOPMENTAL STAGE</scope>
    <scope>TISSUE SPECIFICITY</scope>
    <source>
        <strain>CD-1</strain>
    </source>
</reference>
<reference key="2">
    <citation type="journal article" date="2005" name="Science">
        <title>The transcriptional landscape of the mammalian genome.</title>
        <authorList>
            <person name="Carninci P."/>
            <person name="Kasukawa T."/>
            <person name="Katayama S."/>
            <person name="Gough J."/>
            <person name="Frith M.C."/>
            <person name="Maeda N."/>
            <person name="Oyama R."/>
            <person name="Ravasi T."/>
            <person name="Lenhard B."/>
            <person name="Wells C."/>
            <person name="Kodzius R."/>
            <person name="Shimokawa K."/>
            <person name="Bajic V.B."/>
            <person name="Brenner S.E."/>
            <person name="Batalov S."/>
            <person name="Forrest A.R."/>
            <person name="Zavolan M."/>
            <person name="Davis M.J."/>
            <person name="Wilming L.G."/>
            <person name="Aidinis V."/>
            <person name="Allen J.E."/>
            <person name="Ambesi-Impiombato A."/>
            <person name="Apweiler R."/>
            <person name="Aturaliya R.N."/>
            <person name="Bailey T.L."/>
            <person name="Bansal M."/>
            <person name="Baxter L."/>
            <person name="Beisel K.W."/>
            <person name="Bersano T."/>
            <person name="Bono H."/>
            <person name="Chalk A.M."/>
            <person name="Chiu K.P."/>
            <person name="Choudhary V."/>
            <person name="Christoffels A."/>
            <person name="Clutterbuck D.R."/>
            <person name="Crowe M.L."/>
            <person name="Dalla E."/>
            <person name="Dalrymple B.P."/>
            <person name="de Bono B."/>
            <person name="Della Gatta G."/>
            <person name="di Bernardo D."/>
            <person name="Down T."/>
            <person name="Engstrom P."/>
            <person name="Fagiolini M."/>
            <person name="Faulkner G."/>
            <person name="Fletcher C.F."/>
            <person name="Fukushima T."/>
            <person name="Furuno M."/>
            <person name="Futaki S."/>
            <person name="Gariboldi M."/>
            <person name="Georgii-Hemming P."/>
            <person name="Gingeras T.R."/>
            <person name="Gojobori T."/>
            <person name="Green R.E."/>
            <person name="Gustincich S."/>
            <person name="Harbers M."/>
            <person name="Hayashi Y."/>
            <person name="Hensch T.K."/>
            <person name="Hirokawa N."/>
            <person name="Hill D."/>
            <person name="Huminiecki L."/>
            <person name="Iacono M."/>
            <person name="Ikeo K."/>
            <person name="Iwama A."/>
            <person name="Ishikawa T."/>
            <person name="Jakt M."/>
            <person name="Kanapin A."/>
            <person name="Katoh M."/>
            <person name="Kawasawa Y."/>
            <person name="Kelso J."/>
            <person name="Kitamura H."/>
            <person name="Kitano H."/>
            <person name="Kollias G."/>
            <person name="Krishnan S.P."/>
            <person name="Kruger A."/>
            <person name="Kummerfeld S.K."/>
            <person name="Kurochkin I.V."/>
            <person name="Lareau L.F."/>
            <person name="Lazarevic D."/>
            <person name="Lipovich L."/>
            <person name="Liu J."/>
            <person name="Liuni S."/>
            <person name="McWilliam S."/>
            <person name="Madan Babu M."/>
            <person name="Madera M."/>
            <person name="Marchionni L."/>
            <person name="Matsuda H."/>
            <person name="Matsuzawa S."/>
            <person name="Miki H."/>
            <person name="Mignone F."/>
            <person name="Miyake S."/>
            <person name="Morris K."/>
            <person name="Mottagui-Tabar S."/>
            <person name="Mulder N."/>
            <person name="Nakano N."/>
            <person name="Nakauchi H."/>
            <person name="Ng P."/>
            <person name="Nilsson R."/>
            <person name="Nishiguchi S."/>
            <person name="Nishikawa S."/>
            <person name="Nori F."/>
            <person name="Ohara O."/>
            <person name="Okazaki Y."/>
            <person name="Orlando V."/>
            <person name="Pang K.C."/>
            <person name="Pavan W.J."/>
            <person name="Pavesi G."/>
            <person name="Pesole G."/>
            <person name="Petrovsky N."/>
            <person name="Piazza S."/>
            <person name="Reed J."/>
            <person name="Reid J.F."/>
            <person name="Ring B.Z."/>
            <person name="Ringwald M."/>
            <person name="Rost B."/>
            <person name="Ruan Y."/>
            <person name="Salzberg S.L."/>
            <person name="Sandelin A."/>
            <person name="Schneider C."/>
            <person name="Schoenbach C."/>
            <person name="Sekiguchi K."/>
            <person name="Semple C.A."/>
            <person name="Seno S."/>
            <person name="Sessa L."/>
            <person name="Sheng Y."/>
            <person name="Shibata Y."/>
            <person name="Shimada H."/>
            <person name="Shimada K."/>
            <person name="Silva D."/>
            <person name="Sinclair B."/>
            <person name="Sperling S."/>
            <person name="Stupka E."/>
            <person name="Sugiura K."/>
            <person name="Sultana R."/>
            <person name="Takenaka Y."/>
            <person name="Taki K."/>
            <person name="Tammoja K."/>
            <person name="Tan S.L."/>
            <person name="Tang S."/>
            <person name="Taylor M.S."/>
            <person name="Tegner J."/>
            <person name="Teichmann S.A."/>
            <person name="Ueda H.R."/>
            <person name="van Nimwegen E."/>
            <person name="Verardo R."/>
            <person name="Wei C.L."/>
            <person name="Yagi K."/>
            <person name="Yamanishi H."/>
            <person name="Zabarovsky E."/>
            <person name="Zhu S."/>
            <person name="Zimmer A."/>
            <person name="Hide W."/>
            <person name="Bult C."/>
            <person name="Grimmond S.M."/>
            <person name="Teasdale R.D."/>
            <person name="Liu E.T."/>
            <person name="Brusic V."/>
            <person name="Quackenbush J."/>
            <person name="Wahlestedt C."/>
            <person name="Mattick J.S."/>
            <person name="Hume D.A."/>
            <person name="Kai C."/>
            <person name="Sasaki D."/>
            <person name="Tomaru Y."/>
            <person name="Fukuda S."/>
            <person name="Kanamori-Katayama M."/>
            <person name="Suzuki M."/>
            <person name="Aoki J."/>
            <person name="Arakawa T."/>
            <person name="Iida J."/>
            <person name="Imamura K."/>
            <person name="Itoh M."/>
            <person name="Kato T."/>
            <person name="Kawaji H."/>
            <person name="Kawagashira N."/>
            <person name="Kawashima T."/>
            <person name="Kojima M."/>
            <person name="Kondo S."/>
            <person name="Konno H."/>
            <person name="Nakano K."/>
            <person name="Ninomiya N."/>
            <person name="Nishio T."/>
            <person name="Okada M."/>
            <person name="Plessy C."/>
            <person name="Shibata K."/>
            <person name="Shiraki T."/>
            <person name="Suzuki S."/>
            <person name="Tagami M."/>
            <person name="Waki K."/>
            <person name="Watahiki A."/>
            <person name="Okamura-Oho Y."/>
            <person name="Suzuki H."/>
            <person name="Kawai J."/>
            <person name="Hayashizaki Y."/>
        </authorList>
    </citation>
    <scope>NUCLEOTIDE SEQUENCE [LARGE SCALE MRNA]</scope>
    <source>
        <strain>C57BL/6J</strain>
        <tissue>Placenta</tissue>
    </source>
</reference>
<reference key="3">
    <citation type="journal article" date="2009" name="PLoS Biol.">
        <title>Lineage-specific biology revealed by a finished genome assembly of the mouse.</title>
        <authorList>
            <person name="Church D.M."/>
            <person name="Goodstadt L."/>
            <person name="Hillier L.W."/>
            <person name="Zody M.C."/>
            <person name="Goldstein S."/>
            <person name="She X."/>
            <person name="Bult C.J."/>
            <person name="Agarwala R."/>
            <person name="Cherry J.L."/>
            <person name="DiCuccio M."/>
            <person name="Hlavina W."/>
            <person name="Kapustin Y."/>
            <person name="Meric P."/>
            <person name="Maglott D."/>
            <person name="Birtle Z."/>
            <person name="Marques A.C."/>
            <person name="Graves T."/>
            <person name="Zhou S."/>
            <person name="Teague B."/>
            <person name="Potamousis K."/>
            <person name="Churas C."/>
            <person name="Place M."/>
            <person name="Herschleb J."/>
            <person name="Runnheim R."/>
            <person name="Forrest D."/>
            <person name="Amos-Landgraf J."/>
            <person name="Schwartz D.C."/>
            <person name="Cheng Z."/>
            <person name="Lindblad-Toh K."/>
            <person name="Eichler E.E."/>
            <person name="Ponting C.P."/>
        </authorList>
    </citation>
    <scope>NUCLEOTIDE SEQUENCE [LARGE SCALE GENOMIC DNA]</scope>
    <source>
        <strain>C57BL/6J</strain>
    </source>
</reference>
<reference key="4">
    <citation type="journal article" date="2004" name="Genome Res.">
        <title>The status, quality, and expansion of the NIH full-length cDNA project: the Mammalian Gene Collection (MGC).</title>
        <authorList>
            <consortium name="The MGC Project Team"/>
        </authorList>
    </citation>
    <scope>NUCLEOTIDE SEQUENCE [LARGE SCALE MRNA]</scope>
    <source>
        <tissue>Brain</tissue>
    </source>
</reference>
<name>PR7B1_MOUSE</name>
<dbReference type="EMBL" id="AF525156">
    <property type="protein sequence ID" value="AAN39704.1"/>
    <property type="molecule type" value="mRNA"/>
</dbReference>
<dbReference type="EMBL" id="AK005458">
    <property type="protein sequence ID" value="BAB24049.1"/>
    <property type="molecule type" value="mRNA"/>
</dbReference>
<dbReference type="EMBL" id="AL590522">
    <property type="protein sequence ID" value="CAI23984.1"/>
    <property type="molecule type" value="Genomic_DNA"/>
</dbReference>
<dbReference type="EMBL" id="BC116772">
    <property type="protein sequence ID" value="AAI16773.1"/>
    <property type="molecule type" value="mRNA"/>
</dbReference>
<dbReference type="EMBL" id="BC119183">
    <property type="protein sequence ID" value="AAI19184.1"/>
    <property type="molecule type" value="mRNA"/>
</dbReference>
<dbReference type="CCDS" id="CCDS26402.1"/>
<dbReference type="RefSeq" id="NP_083631.1">
    <property type="nucleotide sequence ID" value="NM_029355.2"/>
</dbReference>
<dbReference type="SMR" id="Q8CGZ9"/>
<dbReference type="FunCoup" id="Q8CGZ9">
    <property type="interactions" value="235"/>
</dbReference>
<dbReference type="STRING" id="10090.ENSMUSP00000079431"/>
<dbReference type="GlyCosmos" id="Q8CGZ9">
    <property type="glycosylation" value="2 sites, No reported glycans"/>
</dbReference>
<dbReference type="GlyGen" id="Q8CGZ9">
    <property type="glycosylation" value="2 sites"/>
</dbReference>
<dbReference type="PhosphoSitePlus" id="Q8CGZ9"/>
<dbReference type="PaxDb" id="10090-ENSMUSP00000079431"/>
<dbReference type="DNASU" id="75596"/>
<dbReference type="Ensembl" id="ENSMUST00000080595.3">
    <property type="protein sequence ID" value="ENSMUSP00000079431.3"/>
    <property type="gene ID" value="ENSMUSG00000021347.4"/>
</dbReference>
<dbReference type="GeneID" id="75596"/>
<dbReference type="KEGG" id="mmu:75596"/>
<dbReference type="UCSC" id="uc007pxx.1">
    <property type="organism name" value="mouse"/>
</dbReference>
<dbReference type="AGR" id="MGI:1922846"/>
<dbReference type="CTD" id="75596"/>
<dbReference type="MGI" id="MGI:1922846">
    <property type="gene designation" value="Prl7b1"/>
</dbReference>
<dbReference type="VEuPathDB" id="HostDB:ENSMUSG00000021347"/>
<dbReference type="eggNOG" id="ENOG502QYU3">
    <property type="taxonomic scope" value="Eukaryota"/>
</dbReference>
<dbReference type="GeneTree" id="ENSGT00950000182818"/>
<dbReference type="HOGENOM" id="CLU_088274_0_1_1"/>
<dbReference type="InParanoid" id="Q8CGZ9"/>
<dbReference type="OMA" id="SALMCKA"/>
<dbReference type="OrthoDB" id="9590794at2759"/>
<dbReference type="PhylomeDB" id="Q8CGZ9"/>
<dbReference type="TreeFam" id="TF332592"/>
<dbReference type="BioGRID-ORCS" id="75596">
    <property type="hits" value="2 hits in 77 CRISPR screens"/>
</dbReference>
<dbReference type="PRO" id="PR:Q8CGZ9"/>
<dbReference type="Proteomes" id="UP000000589">
    <property type="component" value="Chromosome 13"/>
</dbReference>
<dbReference type="RNAct" id="Q8CGZ9">
    <property type="molecule type" value="protein"/>
</dbReference>
<dbReference type="Bgee" id="ENSMUSG00000021347">
    <property type="expression patterns" value="Expressed in placenta labyrinth and 13 other cell types or tissues"/>
</dbReference>
<dbReference type="ExpressionAtlas" id="Q8CGZ9">
    <property type="expression patterns" value="baseline and differential"/>
</dbReference>
<dbReference type="GO" id="GO:0005576">
    <property type="term" value="C:extracellular region"/>
    <property type="evidence" value="ECO:0007669"/>
    <property type="project" value="UniProtKB-SubCell"/>
</dbReference>
<dbReference type="GO" id="GO:0005179">
    <property type="term" value="F:hormone activity"/>
    <property type="evidence" value="ECO:0007669"/>
    <property type="project" value="UniProtKB-KW"/>
</dbReference>
<dbReference type="CDD" id="cd10288">
    <property type="entry name" value="prolactin_like"/>
    <property type="match status" value="1"/>
</dbReference>
<dbReference type="FunFam" id="1.20.1250.10:FF:000041">
    <property type="entry name" value="Growth hormone d20"/>
    <property type="match status" value="1"/>
</dbReference>
<dbReference type="Gene3D" id="1.20.1250.10">
    <property type="match status" value="1"/>
</dbReference>
<dbReference type="InterPro" id="IPR009079">
    <property type="entry name" value="4_helix_cytokine-like_core"/>
</dbReference>
<dbReference type="InterPro" id="IPR001400">
    <property type="entry name" value="Somatotropin/Prolactin"/>
</dbReference>
<dbReference type="InterPro" id="IPR018116">
    <property type="entry name" value="Somatotropin_CS"/>
</dbReference>
<dbReference type="PANTHER" id="PTHR11417:SF17">
    <property type="entry name" value="PROLACTIN-7B1"/>
    <property type="match status" value="1"/>
</dbReference>
<dbReference type="PANTHER" id="PTHR11417">
    <property type="entry name" value="SOMATOTROPIN,PROLACTIN"/>
    <property type="match status" value="1"/>
</dbReference>
<dbReference type="Pfam" id="PF00103">
    <property type="entry name" value="Hormone_1"/>
    <property type="match status" value="1"/>
</dbReference>
<dbReference type="PRINTS" id="PR00836">
    <property type="entry name" value="SOMATOTROPIN"/>
</dbReference>
<dbReference type="SUPFAM" id="SSF47266">
    <property type="entry name" value="4-helical cytokines"/>
    <property type="match status" value="1"/>
</dbReference>
<dbReference type="PROSITE" id="PS00266">
    <property type="entry name" value="SOMATOTROPIN_1"/>
    <property type="match status" value="1"/>
</dbReference>
<comment type="subcellular location">
    <subcellularLocation>
        <location evidence="1">Secreted</location>
    </subcellularLocation>
</comment>
<comment type="tissue specificity">
    <text evidence="3">Expression restricted to placenta. Abundantly expressed in trophoblast cells of the junctional zone and trophoblasts migrating into the mesometrial decidua.</text>
</comment>
<comment type="developmental stage">
    <text evidence="3">Detectable throughout the second half of gestation.</text>
</comment>
<comment type="similarity">
    <text evidence="4">Belongs to the somatotropin/prolactin family.</text>
</comment>
<gene>
    <name type="primary">Prl7b1</name>
    <name type="synonym">Prlpn</name>
</gene>
<organism>
    <name type="scientific">Mus musculus</name>
    <name type="common">Mouse</name>
    <dbReference type="NCBI Taxonomy" id="10090"/>
    <lineage>
        <taxon>Eukaryota</taxon>
        <taxon>Metazoa</taxon>
        <taxon>Chordata</taxon>
        <taxon>Craniata</taxon>
        <taxon>Vertebrata</taxon>
        <taxon>Euteleostomi</taxon>
        <taxon>Mammalia</taxon>
        <taxon>Eutheria</taxon>
        <taxon>Euarchontoglires</taxon>
        <taxon>Glires</taxon>
        <taxon>Rodentia</taxon>
        <taxon>Myomorpha</taxon>
        <taxon>Muroidea</taxon>
        <taxon>Muridae</taxon>
        <taxon>Murinae</taxon>
        <taxon>Mus</taxon>
        <taxon>Mus</taxon>
    </lineage>
</organism>
<sequence length="251" mass="28960">MNTSLTQLCFWALQILLMSNLLLWEDVVSVPTIGSGSGVSEMLTEDLFDDAIILSQHINSLAIETRRIFLSNNFSSDMFITFTLQFNRHDEFVVNGLNSCHTLPLKSPKTEKEAKRISLPDFMNMILSILRAWDNPLHHMETELKSMPGAPFAILARVKDIEVKNKILLDRIMKIAKKVKYGFEENEVYPAWSELASLQSANEESRFFALYKLSYCLFVDTDKVEHYLKHLKCRYFDGYMCQDSVNQINLL</sequence>
<evidence type="ECO:0000250" key="1"/>
<evidence type="ECO:0000255" key="2"/>
<evidence type="ECO:0000269" key="3">
    <source>
    </source>
</evidence>
<evidence type="ECO:0000305" key="4"/>
<accession>Q8CGZ9</accession>
<accession>Q14AN3</accession>
<accession>Q9DAX1</accession>
<protein>
    <recommendedName>
        <fullName>Prolactin-7B1</fullName>
    </recommendedName>
    <alternativeName>
        <fullName>Placental prolactin-like protein N</fullName>
        <shortName>PLP-N</shortName>
        <shortName>PRL-like protein N</shortName>
    </alternativeName>
</protein>
<feature type="signal peptide" evidence="2">
    <location>
        <begin position="1"/>
        <end position="29"/>
    </location>
</feature>
<feature type="chain" id="PRO_0000045149" description="Prolactin-7B1">
    <location>
        <begin position="30"/>
        <end position="251"/>
    </location>
</feature>
<feature type="glycosylation site" description="N-linked (GlcNAc...) asparagine" evidence="2">
    <location>
        <position position="2"/>
    </location>
</feature>
<feature type="glycosylation site" description="N-linked (GlcNAc...) asparagine" evidence="2">
    <location>
        <position position="73"/>
    </location>
</feature>
<feature type="disulfide bond" evidence="1">
    <location>
        <begin position="100"/>
        <end position="216"/>
    </location>
</feature>
<feature type="disulfide bond" evidence="1">
    <location>
        <begin position="233"/>
        <end position="241"/>
    </location>
</feature>
<feature type="sequence conflict" description="In Ref. 1; AAN39704." evidence="4" ref="1">
    <original>V</original>
    <variation>G</variation>
    <location>
        <position position="179"/>
    </location>
</feature>
<keyword id="KW-1015">Disulfide bond</keyword>
<keyword id="KW-0325">Glycoprotein</keyword>
<keyword id="KW-0372">Hormone</keyword>
<keyword id="KW-1185">Reference proteome</keyword>
<keyword id="KW-0964">Secreted</keyword>
<keyword id="KW-0732">Signal</keyword>